<organism>
    <name type="scientific">Oryza sativa subsp. japonica</name>
    <name type="common">Rice</name>
    <dbReference type="NCBI Taxonomy" id="39947"/>
    <lineage>
        <taxon>Eukaryota</taxon>
        <taxon>Viridiplantae</taxon>
        <taxon>Streptophyta</taxon>
        <taxon>Embryophyta</taxon>
        <taxon>Tracheophyta</taxon>
        <taxon>Spermatophyta</taxon>
        <taxon>Magnoliopsida</taxon>
        <taxon>Liliopsida</taxon>
        <taxon>Poales</taxon>
        <taxon>Poaceae</taxon>
        <taxon>BOP clade</taxon>
        <taxon>Oryzoideae</taxon>
        <taxon>Oryzeae</taxon>
        <taxon>Oryzinae</taxon>
        <taxon>Oryza</taxon>
        <taxon>Oryza sativa</taxon>
    </lineage>
</organism>
<keyword id="KW-0004">4Fe-4S</keyword>
<keyword id="KW-0150">Chloroplast</keyword>
<keyword id="KW-0408">Iron</keyword>
<keyword id="KW-0411">Iron-sulfur</keyword>
<keyword id="KW-0479">Metal-binding</keyword>
<keyword id="KW-0934">Plastid</keyword>
<keyword id="KW-1185">Reference proteome</keyword>
<keyword id="KW-0949">S-adenosyl-L-methionine</keyword>
<keyword id="KW-0808">Transferase</keyword>
<keyword id="KW-0809">Transit peptide</keyword>
<evidence type="ECO:0000255" key="1">
    <source>
        <dbReference type="HAMAP-Rule" id="MF_03129"/>
    </source>
</evidence>
<evidence type="ECO:0000255" key="2">
    <source>
        <dbReference type="PROSITE-ProRule" id="PRU01266"/>
    </source>
</evidence>
<evidence type="ECO:0000256" key="3">
    <source>
        <dbReference type="SAM" id="MobiDB-lite"/>
    </source>
</evidence>
<evidence type="ECO:0000305" key="4"/>
<dbReference type="EC" id="2.8.1.8" evidence="1"/>
<dbReference type="EMBL" id="AP003106">
    <property type="protein sequence ID" value="BAD52715.1"/>
    <property type="molecule type" value="Genomic_DNA"/>
</dbReference>
<dbReference type="EMBL" id="AP003371">
    <property type="protein sequence ID" value="BAD53339.1"/>
    <property type="molecule type" value="Genomic_DNA"/>
</dbReference>
<dbReference type="EMBL" id="AP008207">
    <property type="protein sequence ID" value="BAF06284.1"/>
    <property type="molecule type" value="Genomic_DNA"/>
</dbReference>
<dbReference type="EMBL" id="AP014957">
    <property type="status" value="NOT_ANNOTATED_CDS"/>
    <property type="molecule type" value="Genomic_DNA"/>
</dbReference>
<dbReference type="EMBL" id="CM000138">
    <property type="protein sequence ID" value="EAZ13677.1"/>
    <property type="status" value="ALT_SEQ"/>
    <property type="molecule type" value="Genomic_DNA"/>
</dbReference>
<dbReference type="RefSeq" id="XP_015623802.1">
    <property type="nucleotide sequence ID" value="XM_015768316.1"/>
</dbReference>
<dbReference type="SMR" id="Q5ZAQ2"/>
<dbReference type="FunCoup" id="Q5ZAQ2">
    <property type="interactions" value="1157"/>
</dbReference>
<dbReference type="STRING" id="39947.Q5ZAQ2"/>
<dbReference type="PaxDb" id="39947-Q5ZAQ2"/>
<dbReference type="KEGG" id="dosa:Os01g0769100"/>
<dbReference type="InParanoid" id="Q5ZAQ2"/>
<dbReference type="OrthoDB" id="3231at2759"/>
<dbReference type="UniPathway" id="UPA00538">
    <property type="reaction ID" value="UER00593"/>
</dbReference>
<dbReference type="Proteomes" id="UP000000763">
    <property type="component" value="Chromosome 1"/>
</dbReference>
<dbReference type="Proteomes" id="UP000007752">
    <property type="component" value="Chromosome 1"/>
</dbReference>
<dbReference type="Proteomes" id="UP000059680">
    <property type="component" value="Chromosome 1"/>
</dbReference>
<dbReference type="GO" id="GO:0009507">
    <property type="term" value="C:chloroplast"/>
    <property type="evidence" value="ECO:0007669"/>
    <property type="project" value="UniProtKB-SubCell"/>
</dbReference>
<dbReference type="GO" id="GO:0005739">
    <property type="term" value="C:mitochondrion"/>
    <property type="evidence" value="ECO:0000318"/>
    <property type="project" value="GO_Central"/>
</dbReference>
<dbReference type="GO" id="GO:0051539">
    <property type="term" value="F:4 iron, 4 sulfur cluster binding"/>
    <property type="evidence" value="ECO:0007669"/>
    <property type="project" value="UniProtKB-UniRule"/>
</dbReference>
<dbReference type="GO" id="GO:0016992">
    <property type="term" value="F:lipoate synthase activity"/>
    <property type="evidence" value="ECO:0000318"/>
    <property type="project" value="GO_Central"/>
</dbReference>
<dbReference type="GO" id="GO:0046872">
    <property type="term" value="F:metal ion binding"/>
    <property type="evidence" value="ECO:0007669"/>
    <property type="project" value="UniProtKB-KW"/>
</dbReference>
<dbReference type="GO" id="GO:0009107">
    <property type="term" value="P:lipoate biosynthetic process"/>
    <property type="evidence" value="ECO:0000318"/>
    <property type="project" value="GO_Central"/>
</dbReference>
<dbReference type="CDD" id="cd01335">
    <property type="entry name" value="Radical_SAM"/>
    <property type="match status" value="1"/>
</dbReference>
<dbReference type="FunFam" id="3.20.20.70:FF:000036">
    <property type="entry name" value="Lipoyl synthase, mitochondrial"/>
    <property type="match status" value="1"/>
</dbReference>
<dbReference type="Gene3D" id="3.20.20.70">
    <property type="entry name" value="Aldolase class I"/>
    <property type="match status" value="1"/>
</dbReference>
<dbReference type="HAMAP" id="MF_00206">
    <property type="entry name" value="Lipoyl_synth"/>
    <property type="match status" value="1"/>
</dbReference>
<dbReference type="HAMAP" id="MF_03129">
    <property type="entry name" value="Lipoyl_synth_plantC"/>
    <property type="match status" value="1"/>
</dbReference>
<dbReference type="InterPro" id="IPR013785">
    <property type="entry name" value="Aldolase_TIM"/>
</dbReference>
<dbReference type="InterPro" id="IPR006638">
    <property type="entry name" value="Elp3/MiaA/NifB-like_rSAM"/>
</dbReference>
<dbReference type="InterPro" id="IPR003698">
    <property type="entry name" value="Lipoyl_synth"/>
</dbReference>
<dbReference type="InterPro" id="IPR027526">
    <property type="entry name" value="Lipoyl_synth_chlpt"/>
</dbReference>
<dbReference type="InterPro" id="IPR007197">
    <property type="entry name" value="rSAM"/>
</dbReference>
<dbReference type="NCBIfam" id="TIGR00510">
    <property type="entry name" value="lipA"/>
    <property type="match status" value="1"/>
</dbReference>
<dbReference type="NCBIfam" id="NF004019">
    <property type="entry name" value="PRK05481.1"/>
    <property type="match status" value="1"/>
</dbReference>
<dbReference type="NCBIfam" id="NF009544">
    <property type="entry name" value="PRK12928.1"/>
    <property type="match status" value="1"/>
</dbReference>
<dbReference type="PANTHER" id="PTHR10949">
    <property type="entry name" value="LIPOYL SYNTHASE"/>
    <property type="match status" value="1"/>
</dbReference>
<dbReference type="PANTHER" id="PTHR10949:SF31">
    <property type="entry name" value="LIPOYL SYNTHASE 1, CHLOROPLASTIC"/>
    <property type="match status" value="1"/>
</dbReference>
<dbReference type="Pfam" id="PF04055">
    <property type="entry name" value="Radical_SAM"/>
    <property type="match status" value="1"/>
</dbReference>
<dbReference type="PIRSF" id="PIRSF005963">
    <property type="entry name" value="Lipoyl_synth"/>
    <property type="match status" value="1"/>
</dbReference>
<dbReference type="SFLD" id="SFLDF00271">
    <property type="entry name" value="lipoyl_synthase"/>
    <property type="match status" value="1"/>
</dbReference>
<dbReference type="SFLD" id="SFLDG01058">
    <property type="entry name" value="lipoyl_synthase_like"/>
    <property type="match status" value="1"/>
</dbReference>
<dbReference type="SMART" id="SM00729">
    <property type="entry name" value="Elp3"/>
    <property type="match status" value="1"/>
</dbReference>
<dbReference type="SUPFAM" id="SSF102114">
    <property type="entry name" value="Radical SAM enzymes"/>
    <property type="match status" value="1"/>
</dbReference>
<dbReference type="PROSITE" id="PS51918">
    <property type="entry name" value="RADICAL_SAM"/>
    <property type="match status" value="1"/>
</dbReference>
<accession>Q5ZAQ2</accession>
<accession>A2ZY80</accession>
<reference key="1">
    <citation type="journal article" date="2002" name="Nature">
        <title>The genome sequence and structure of rice chromosome 1.</title>
        <authorList>
            <person name="Sasaki T."/>
            <person name="Matsumoto T."/>
            <person name="Yamamoto K."/>
            <person name="Sakata K."/>
            <person name="Baba T."/>
            <person name="Katayose Y."/>
            <person name="Wu J."/>
            <person name="Niimura Y."/>
            <person name="Cheng Z."/>
            <person name="Nagamura Y."/>
            <person name="Antonio B.A."/>
            <person name="Kanamori H."/>
            <person name="Hosokawa S."/>
            <person name="Masukawa M."/>
            <person name="Arikawa K."/>
            <person name="Chiden Y."/>
            <person name="Hayashi M."/>
            <person name="Okamoto M."/>
            <person name="Ando T."/>
            <person name="Aoki H."/>
            <person name="Arita K."/>
            <person name="Hamada M."/>
            <person name="Harada C."/>
            <person name="Hijishita S."/>
            <person name="Honda M."/>
            <person name="Ichikawa Y."/>
            <person name="Idonuma A."/>
            <person name="Iijima M."/>
            <person name="Ikeda M."/>
            <person name="Ikeno M."/>
            <person name="Ito S."/>
            <person name="Ito T."/>
            <person name="Ito Y."/>
            <person name="Ito Y."/>
            <person name="Iwabuchi A."/>
            <person name="Kamiya K."/>
            <person name="Karasawa W."/>
            <person name="Katagiri S."/>
            <person name="Kikuta A."/>
            <person name="Kobayashi N."/>
            <person name="Kono I."/>
            <person name="Machita K."/>
            <person name="Maehara T."/>
            <person name="Mizuno H."/>
            <person name="Mizubayashi T."/>
            <person name="Mukai Y."/>
            <person name="Nagasaki H."/>
            <person name="Nakashima M."/>
            <person name="Nakama Y."/>
            <person name="Nakamichi Y."/>
            <person name="Nakamura M."/>
            <person name="Namiki N."/>
            <person name="Negishi M."/>
            <person name="Ohta I."/>
            <person name="Ono N."/>
            <person name="Saji S."/>
            <person name="Sakai K."/>
            <person name="Shibata M."/>
            <person name="Shimokawa T."/>
            <person name="Shomura A."/>
            <person name="Song J."/>
            <person name="Takazaki Y."/>
            <person name="Terasawa K."/>
            <person name="Tsuji K."/>
            <person name="Waki K."/>
            <person name="Yamagata H."/>
            <person name="Yamane H."/>
            <person name="Yoshiki S."/>
            <person name="Yoshihara R."/>
            <person name="Yukawa K."/>
            <person name="Zhong H."/>
            <person name="Iwama H."/>
            <person name="Endo T."/>
            <person name="Ito H."/>
            <person name="Hahn J.H."/>
            <person name="Kim H.-I."/>
            <person name="Eun M.-Y."/>
            <person name="Yano M."/>
            <person name="Jiang J."/>
            <person name="Gojobori T."/>
        </authorList>
    </citation>
    <scope>NUCLEOTIDE SEQUENCE [LARGE SCALE GENOMIC DNA]</scope>
    <source>
        <strain>cv. Nipponbare</strain>
    </source>
</reference>
<reference key="2">
    <citation type="journal article" date="2005" name="Nature">
        <title>The map-based sequence of the rice genome.</title>
        <authorList>
            <consortium name="International rice genome sequencing project (IRGSP)"/>
        </authorList>
    </citation>
    <scope>NUCLEOTIDE SEQUENCE [LARGE SCALE GENOMIC DNA]</scope>
    <source>
        <strain>cv. Nipponbare</strain>
    </source>
</reference>
<reference key="3">
    <citation type="journal article" date="2008" name="Nucleic Acids Res.">
        <title>The rice annotation project database (RAP-DB): 2008 update.</title>
        <authorList>
            <consortium name="The rice annotation project (RAP)"/>
        </authorList>
    </citation>
    <scope>GENOME REANNOTATION</scope>
    <source>
        <strain>cv. Nipponbare</strain>
    </source>
</reference>
<reference key="4">
    <citation type="journal article" date="2013" name="Rice">
        <title>Improvement of the Oryza sativa Nipponbare reference genome using next generation sequence and optical map data.</title>
        <authorList>
            <person name="Kawahara Y."/>
            <person name="de la Bastide M."/>
            <person name="Hamilton J.P."/>
            <person name="Kanamori H."/>
            <person name="McCombie W.R."/>
            <person name="Ouyang S."/>
            <person name="Schwartz D.C."/>
            <person name="Tanaka T."/>
            <person name="Wu J."/>
            <person name="Zhou S."/>
            <person name="Childs K.L."/>
            <person name="Davidson R.M."/>
            <person name="Lin H."/>
            <person name="Quesada-Ocampo L."/>
            <person name="Vaillancourt B."/>
            <person name="Sakai H."/>
            <person name="Lee S.S."/>
            <person name="Kim J."/>
            <person name="Numa H."/>
            <person name="Itoh T."/>
            <person name="Buell C.R."/>
            <person name="Matsumoto T."/>
        </authorList>
    </citation>
    <scope>GENOME REANNOTATION</scope>
    <source>
        <strain>cv. Nipponbare</strain>
    </source>
</reference>
<reference key="5">
    <citation type="journal article" date="2005" name="PLoS Biol.">
        <title>The genomes of Oryza sativa: a history of duplications.</title>
        <authorList>
            <person name="Yu J."/>
            <person name="Wang J."/>
            <person name="Lin W."/>
            <person name="Li S."/>
            <person name="Li H."/>
            <person name="Zhou J."/>
            <person name="Ni P."/>
            <person name="Dong W."/>
            <person name="Hu S."/>
            <person name="Zeng C."/>
            <person name="Zhang J."/>
            <person name="Zhang Y."/>
            <person name="Li R."/>
            <person name="Xu Z."/>
            <person name="Li S."/>
            <person name="Li X."/>
            <person name="Zheng H."/>
            <person name="Cong L."/>
            <person name="Lin L."/>
            <person name="Yin J."/>
            <person name="Geng J."/>
            <person name="Li G."/>
            <person name="Shi J."/>
            <person name="Liu J."/>
            <person name="Lv H."/>
            <person name="Li J."/>
            <person name="Wang J."/>
            <person name="Deng Y."/>
            <person name="Ran L."/>
            <person name="Shi X."/>
            <person name="Wang X."/>
            <person name="Wu Q."/>
            <person name="Li C."/>
            <person name="Ren X."/>
            <person name="Wang J."/>
            <person name="Wang X."/>
            <person name="Li D."/>
            <person name="Liu D."/>
            <person name="Zhang X."/>
            <person name="Ji Z."/>
            <person name="Zhao W."/>
            <person name="Sun Y."/>
            <person name="Zhang Z."/>
            <person name="Bao J."/>
            <person name="Han Y."/>
            <person name="Dong L."/>
            <person name="Ji J."/>
            <person name="Chen P."/>
            <person name="Wu S."/>
            <person name="Liu J."/>
            <person name="Xiao Y."/>
            <person name="Bu D."/>
            <person name="Tan J."/>
            <person name="Yang L."/>
            <person name="Ye C."/>
            <person name="Zhang J."/>
            <person name="Xu J."/>
            <person name="Zhou Y."/>
            <person name="Yu Y."/>
            <person name="Zhang B."/>
            <person name="Zhuang S."/>
            <person name="Wei H."/>
            <person name="Liu B."/>
            <person name="Lei M."/>
            <person name="Yu H."/>
            <person name="Li Y."/>
            <person name="Xu H."/>
            <person name="Wei S."/>
            <person name="He X."/>
            <person name="Fang L."/>
            <person name="Zhang Z."/>
            <person name="Zhang Y."/>
            <person name="Huang X."/>
            <person name="Su Z."/>
            <person name="Tong W."/>
            <person name="Li J."/>
            <person name="Tong Z."/>
            <person name="Li S."/>
            <person name="Ye J."/>
            <person name="Wang L."/>
            <person name="Fang L."/>
            <person name="Lei T."/>
            <person name="Chen C.-S."/>
            <person name="Chen H.-C."/>
            <person name="Xu Z."/>
            <person name="Li H."/>
            <person name="Huang H."/>
            <person name="Zhang F."/>
            <person name="Xu H."/>
            <person name="Li N."/>
            <person name="Zhao C."/>
            <person name="Li S."/>
            <person name="Dong L."/>
            <person name="Huang Y."/>
            <person name="Li L."/>
            <person name="Xi Y."/>
            <person name="Qi Q."/>
            <person name="Li W."/>
            <person name="Zhang B."/>
            <person name="Hu W."/>
            <person name="Zhang Y."/>
            <person name="Tian X."/>
            <person name="Jiao Y."/>
            <person name="Liang X."/>
            <person name="Jin J."/>
            <person name="Gao L."/>
            <person name="Zheng W."/>
            <person name="Hao B."/>
            <person name="Liu S.-M."/>
            <person name="Wang W."/>
            <person name="Yuan L."/>
            <person name="Cao M."/>
            <person name="McDermott J."/>
            <person name="Samudrala R."/>
            <person name="Wang J."/>
            <person name="Wong G.K.-S."/>
            <person name="Yang H."/>
        </authorList>
    </citation>
    <scope>NUCLEOTIDE SEQUENCE [LARGE SCALE GENOMIC DNA]</scope>
    <source>
        <strain>cv. Nipponbare</strain>
    </source>
</reference>
<gene>
    <name evidence="1" type="primary">LIP1P-1</name>
    <name type="ordered locus">Os01g0769100</name>
    <name type="ordered locus">LOC_Os01g56310</name>
    <name type="ORF">B1143G03.28</name>
    <name type="ORF">OsJ_03597</name>
    <name type="ORF">P0665A11.4</name>
</gene>
<proteinExistence type="inferred from homology"/>
<protein>
    <recommendedName>
        <fullName>Lipoyl synthase 1, chloroplastic</fullName>
        <ecNumber evidence="1">2.8.1.8</ecNumber>
    </recommendedName>
    <alternativeName>
        <fullName evidence="1">Lipoate synthase 1</fullName>
        <shortName evidence="1">LS 1</shortName>
        <shortName evidence="1">Lip-syn 1</shortName>
    </alternativeName>
    <alternativeName>
        <fullName evidence="1">Lipoate synthase, plastidial 1</fullName>
        <shortName evidence="1">LIP1p 1</shortName>
    </alternativeName>
    <alternativeName>
        <fullName evidence="1">Lipoic acid synthase 1</fullName>
    </alternativeName>
</protein>
<sequence length="370" mass="39940">MMQSSLARPLPRPPIRPACGNPVCRSRPGSVSVARCRAEAAPPAPAPAARRAAGPYTGRDPEVKKPAWLRQRAAQGEKYARLRESIGELKLNTVCVEAQCPNIGECWNGGGGAGGEGDGIATATIMVLGDTCTRGCRFCAVKTSNKPPPPDPLEPLNTALAVASWGVDYVVLTSVDRDDLPDGGSSHFAQTVRALKELKPGILVECLTSDFRGDLEAVSALANSGLDVFAHNIETVRSLQRIVRDPRAGYDQSLAVLKHAKSCKEGMITKSSIMLGLGETDEEVKQAMIDLRAIGVDILTLGQYLQPTERHLTVREYVTPEKFQFWKEYGESVGFRYVASGPLVRSSYRAGELFVQNLVRNNKPKLPASS</sequence>
<name>LISC1_ORYSJ</name>
<feature type="transit peptide" description="Chloroplast" evidence="1">
    <location>
        <begin position="1"/>
        <end position="37"/>
    </location>
</feature>
<feature type="chain" id="PRO_0000398862" description="Lipoyl synthase 1, chloroplastic">
    <location>
        <begin position="38"/>
        <end position="370"/>
    </location>
</feature>
<feature type="domain" description="Radical SAM core" evidence="2">
    <location>
        <begin position="115"/>
        <end position="336"/>
    </location>
</feature>
<feature type="region of interest" description="Disordered" evidence="3">
    <location>
        <begin position="1"/>
        <end position="25"/>
    </location>
</feature>
<feature type="region of interest" description="Disordered" evidence="3">
    <location>
        <begin position="39"/>
        <end position="67"/>
    </location>
</feature>
<feature type="binding site" evidence="1">
    <location>
        <position position="95"/>
    </location>
    <ligand>
        <name>[4Fe-4S] cluster</name>
        <dbReference type="ChEBI" id="CHEBI:49883"/>
        <label>1</label>
    </ligand>
</feature>
<feature type="binding site" evidence="1">
    <location>
        <position position="100"/>
    </location>
    <ligand>
        <name>[4Fe-4S] cluster</name>
        <dbReference type="ChEBI" id="CHEBI:49883"/>
        <label>1</label>
    </ligand>
</feature>
<feature type="binding site" evidence="1">
    <location>
        <position position="106"/>
    </location>
    <ligand>
        <name>[4Fe-4S] cluster</name>
        <dbReference type="ChEBI" id="CHEBI:49883"/>
        <label>1</label>
    </ligand>
</feature>
<feature type="binding site" evidence="1">
    <location>
        <position position="132"/>
    </location>
    <ligand>
        <name>[4Fe-4S] cluster</name>
        <dbReference type="ChEBI" id="CHEBI:49883"/>
        <label>2</label>
        <note>4Fe-4S-S-AdoMet</note>
    </ligand>
</feature>
<feature type="binding site" evidence="1">
    <location>
        <position position="136"/>
    </location>
    <ligand>
        <name>[4Fe-4S] cluster</name>
        <dbReference type="ChEBI" id="CHEBI:49883"/>
        <label>2</label>
        <note>4Fe-4S-S-AdoMet</note>
    </ligand>
</feature>
<feature type="binding site" evidence="1">
    <location>
        <position position="139"/>
    </location>
    <ligand>
        <name>[4Fe-4S] cluster</name>
        <dbReference type="ChEBI" id="CHEBI:49883"/>
        <label>2</label>
        <note>4Fe-4S-S-AdoMet</note>
    </ligand>
</feature>
<feature type="binding site" evidence="1">
    <location>
        <position position="347"/>
    </location>
    <ligand>
        <name>[4Fe-4S] cluster</name>
        <dbReference type="ChEBI" id="CHEBI:49883"/>
        <label>1</label>
    </ligand>
</feature>
<comment type="function">
    <text evidence="1">Catalyzes the radical-mediated insertion of two sulfur atoms into the C-6 and C-8 positions of the octanoyl moiety bound to the lipoyl domains of lipoate-dependent enzymes, thereby converting the octanoylated domains into lipoylated derivatives.</text>
</comment>
<comment type="catalytic activity">
    <reaction evidence="1">
        <text>[[Fe-S] cluster scaffold protein carrying a second [4Fe-4S](2+) cluster] + N(6)-octanoyl-L-lysyl-[protein] + 2 oxidized [2Fe-2S]-[ferredoxin] + 2 S-adenosyl-L-methionine + 4 H(+) = [[Fe-S] cluster scaffold protein] + N(6)-[(R)-dihydrolipoyl]-L-lysyl-[protein] + 4 Fe(3+) + 2 hydrogen sulfide + 2 5'-deoxyadenosine + 2 L-methionine + 2 reduced [2Fe-2S]-[ferredoxin]</text>
        <dbReference type="Rhea" id="RHEA:16585"/>
        <dbReference type="Rhea" id="RHEA-COMP:9928"/>
        <dbReference type="Rhea" id="RHEA-COMP:10000"/>
        <dbReference type="Rhea" id="RHEA-COMP:10001"/>
        <dbReference type="Rhea" id="RHEA-COMP:10475"/>
        <dbReference type="Rhea" id="RHEA-COMP:14568"/>
        <dbReference type="Rhea" id="RHEA-COMP:14569"/>
        <dbReference type="ChEBI" id="CHEBI:15378"/>
        <dbReference type="ChEBI" id="CHEBI:17319"/>
        <dbReference type="ChEBI" id="CHEBI:29034"/>
        <dbReference type="ChEBI" id="CHEBI:29919"/>
        <dbReference type="ChEBI" id="CHEBI:33722"/>
        <dbReference type="ChEBI" id="CHEBI:33737"/>
        <dbReference type="ChEBI" id="CHEBI:33738"/>
        <dbReference type="ChEBI" id="CHEBI:57844"/>
        <dbReference type="ChEBI" id="CHEBI:59789"/>
        <dbReference type="ChEBI" id="CHEBI:78809"/>
        <dbReference type="ChEBI" id="CHEBI:83100"/>
        <dbReference type="EC" id="2.8.1.8"/>
    </reaction>
</comment>
<comment type="cofactor">
    <cofactor evidence="1">
        <name>[4Fe-4S] cluster</name>
        <dbReference type="ChEBI" id="CHEBI:49883"/>
    </cofactor>
    <text evidence="1">Binds 2 [4Fe-4S] clusters per subunit. One cluster is coordinated with 3 cysteines and an exchangeable S-adenosyl-L-methionine.</text>
</comment>
<comment type="pathway">
    <text evidence="1">Protein modification; protein lipoylation via endogenous pathway; protein N(6)-(lipoyl)lysine from octanoyl-[acyl-carrier-protein]: step 2/2.</text>
</comment>
<comment type="subcellular location">
    <subcellularLocation>
        <location evidence="1">Plastid</location>
        <location evidence="1">Chloroplast</location>
    </subcellularLocation>
</comment>
<comment type="similarity">
    <text evidence="1">Belongs to the radical SAM superfamily. Lipoyl synthase family.</text>
</comment>
<comment type="sequence caution" evidence="4">
    <conflict type="erroneous gene model prediction">
        <sequence resource="EMBL-CDS" id="EAZ13677"/>
    </conflict>
</comment>